<accession>Q7URG5</accession>
<name>TIG_RHOBA</name>
<proteinExistence type="inferred from homology"/>
<reference key="1">
    <citation type="journal article" date="2003" name="Proc. Natl. Acad. Sci. U.S.A.">
        <title>Complete genome sequence of the marine planctomycete Pirellula sp. strain 1.</title>
        <authorList>
            <person name="Gloeckner F.O."/>
            <person name="Kube M."/>
            <person name="Bauer M."/>
            <person name="Teeling H."/>
            <person name="Lombardot T."/>
            <person name="Ludwig W."/>
            <person name="Gade D."/>
            <person name="Beck A."/>
            <person name="Borzym K."/>
            <person name="Heitmann K."/>
            <person name="Rabus R."/>
            <person name="Schlesner H."/>
            <person name="Amann R."/>
            <person name="Reinhardt R."/>
        </authorList>
    </citation>
    <scope>NUCLEOTIDE SEQUENCE [LARGE SCALE GENOMIC DNA]</scope>
    <source>
        <strain>DSM 10527 / NCIMB 13988 / SH1</strain>
    </source>
</reference>
<protein>
    <recommendedName>
        <fullName evidence="1">Trigger factor</fullName>
        <shortName evidence="1">TF</shortName>
        <ecNumber evidence="1">5.2.1.8</ecNumber>
    </recommendedName>
    <alternativeName>
        <fullName evidence="1">PPIase</fullName>
    </alternativeName>
</protein>
<comment type="function">
    <text evidence="1">Involved in protein export. Acts as a chaperone by maintaining the newly synthesized protein in an open conformation. Functions as a peptidyl-prolyl cis-trans isomerase.</text>
</comment>
<comment type="catalytic activity">
    <reaction evidence="1">
        <text>[protein]-peptidylproline (omega=180) = [protein]-peptidylproline (omega=0)</text>
        <dbReference type="Rhea" id="RHEA:16237"/>
        <dbReference type="Rhea" id="RHEA-COMP:10747"/>
        <dbReference type="Rhea" id="RHEA-COMP:10748"/>
        <dbReference type="ChEBI" id="CHEBI:83833"/>
        <dbReference type="ChEBI" id="CHEBI:83834"/>
        <dbReference type="EC" id="5.2.1.8"/>
    </reaction>
</comment>
<comment type="subcellular location">
    <subcellularLocation>
        <location>Cytoplasm</location>
    </subcellularLocation>
    <text evidence="1">About half TF is bound to the ribosome near the polypeptide exit tunnel while the other half is free in the cytoplasm.</text>
</comment>
<comment type="domain">
    <text evidence="1">Consists of 3 domains; the N-terminus binds the ribosome, the middle domain has PPIase activity, while the C-terminus has intrinsic chaperone activity on its own.</text>
</comment>
<comment type="similarity">
    <text evidence="1">Belongs to the FKBP-type PPIase family. Tig subfamily.</text>
</comment>
<comment type="sequence caution" evidence="3">
    <conflict type="erroneous initiation">
        <sequence resource="EMBL-CDS" id="CAD74375"/>
    </conflict>
</comment>
<evidence type="ECO:0000255" key="1">
    <source>
        <dbReference type="HAMAP-Rule" id="MF_00303"/>
    </source>
</evidence>
<evidence type="ECO:0000256" key="2">
    <source>
        <dbReference type="SAM" id="MobiDB-lite"/>
    </source>
</evidence>
<evidence type="ECO:0000305" key="3"/>
<keyword id="KW-0131">Cell cycle</keyword>
<keyword id="KW-0132">Cell division</keyword>
<keyword id="KW-0143">Chaperone</keyword>
<keyword id="KW-0963">Cytoplasm</keyword>
<keyword id="KW-0413">Isomerase</keyword>
<keyword id="KW-1185">Reference proteome</keyword>
<keyword id="KW-0697">Rotamase</keyword>
<dbReference type="EC" id="5.2.1.8" evidence="1"/>
<dbReference type="EMBL" id="BX294142">
    <property type="protein sequence ID" value="CAD74375.1"/>
    <property type="status" value="ALT_INIT"/>
    <property type="molecule type" value="Genomic_DNA"/>
</dbReference>
<dbReference type="RefSeq" id="NP_866834.1">
    <property type="nucleotide sequence ID" value="NC_005027.1"/>
</dbReference>
<dbReference type="SMR" id="Q7URG5"/>
<dbReference type="FunCoup" id="Q7URG5">
    <property type="interactions" value="593"/>
</dbReference>
<dbReference type="STRING" id="243090.RB5681"/>
<dbReference type="EnsemblBacteria" id="CAD74375">
    <property type="protein sequence ID" value="CAD74375"/>
    <property type="gene ID" value="RB5681"/>
</dbReference>
<dbReference type="KEGG" id="rba:RB5681"/>
<dbReference type="PATRIC" id="fig|243090.15.peg.2728"/>
<dbReference type="eggNOG" id="COG0544">
    <property type="taxonomic scope" value="Bacteria"/>
</dbReference>
<dbReference type="HOGENOM" id="CLU_033058_3_3_0"/>
<dbReference type="InParanoid" id="Q7URG5"/>
<dbReference type="OrthoDB" id="9767721at2"/>
<dbReference type="Proteomes" id="UP000001025">
    <property type="component" value="Chromosome"/>
</dbReference>
<dbReference type="GO" id="GO:0005737">
    <property type="term" value="C:cytoplasm"/>
    <property type="evidence" value="ECO:0007669"/>
    <property type="project" value="UniProtKB-SubCell"/>
</dbReference>
<dbReference type="GO" id="GO:0003755">
    <property type="term" value="F:peptidyl-prolyl cis-trans isomerase activity"/>
    <property type="evidence" value="ECO:0000318"/>
    <property type="project" value="GO_Central"/>
</dbReference>
<dbReference type="GO" id="GO:0044183">
    <property type="term" value="F:protein folding chaperone"/>
    <property type="evidence" value="ECO:0000318"/>
    <property type="project" value="GO_Central"/>
</dbReference>
<dbReference type="GO" id="GO:0043022">
    <property type="term" value="F:ribosome binding"/>
    <property type="evidence" value="ECO:0000318"/>
    <property type="project" value="GO_Central"/>
</dbReference>
<dbReference type="GO" id="GO:0051083">
    <property type="term" value="P:'de novo' cotranslational protein folding"/>
    <property type="evidence" value="ECO:0000318"/>
    <property type="project" value="GO_Central"/>
</dbReference>
<dbReference type="GO" id="GO:0051301">
    <property type="term" value="P:cell division"/>
    <property type="evidence" value="ECO:0007669"/>
    <property type="project" value="UniProtKB-KW"/>
</dbReference>
<dbReference type="GO" id="GO:0061077">
    <property type="term" value="P:chaperone-mediated protein folding"/>
    <property type="evidence" value="ECO:0000318"/>
    <property type="project" value="GO_Central"/>
</dbReference>
<dbReference type="GO" id="GO:0015031">
    <property type="term" value="P:protein transport"/>
    <property type="evidence" value="ECO:0007669"/>
    <property type="project" value="UniProtKB-UniRule"/>
</dbReference>
<dbReference type="GO" id="GO:0043335">
    <property type="term" value="P:protein unfolding"/>
    <property type="evidence" value="ECO:0000318"/>
    <property type="project" value="GO_Central"/>
</dbReference>
<dbReference type="FunFam" id="3.30.70.1050:FF:000006">
    <property type="entry name" value="Trigger factor"/>
    <property type="match status" value="1"/>
</dbReference>
<dbReference type="Gene3D" id="3.10.50.40">
    <property type="match status" value="1"/>
</dbReference>
<dbReference type="Gene3D" id="3.30.70.1050">
    <property type="entry name" value="Trigger factor ribosome-binding domain"/>
    <property type="match status" value="1"/>
</dbReference>
<dbReference type="Gene3D" id="1.10.3120.10">
    <property type="entry name" value="Trigger factor, C-terminal domain"/>
    <property type="match status" value="1"/>
</dbReference>
<dbReference type="HAMAP" id="MF_00303">
    <property type="entry name" value="Trigger_factor_Tig"/>
    <property type="match status" value="1"/>
</dbReference>
<dbReference type="InterPro" id="IPR046357">
    <property type="entry name" value="PPIase_dom_sf"/>
</dbReference>
<dbReference type="InterPro" id="IPR005215">
    <property type="entry name" value="Trig_fac"/>
</dbReference>
<dbReference type="InterPro" id="IPR008880">
    <property type="entry name" value="Trigger_fac_C"/>
</dbReference>
<dbReference type="InterPro" id="IPR037041">
    <property type="entry name" value="Trigger_fac_C_sf"/>
</dbReference>
<dbReference type="InterPro" id="IPR008881">
    <property type="entry name" value="Trigger_fac_ribosome-bd_bac"/>
</dbReference>
<dbReference type="InterPro" id="IPR036611">
    <property type="entry name" value="Trigger_fac_ribosome-bd_sf"/>
</dbReference>
<dbReference type="InterPro" id="IPR027304">
    <property type="entry name" value="Trigger_fact/SurA_dom_sf"/>
</dbReference>
<dbReference type="NCBIfam" id="TIGR00115">
    <property type="entry name" value="tig"/>
    <property type="match status" value="1"/>
</dbReference>
<dbReference type="PANTHER" id="PTHR30560">
    <property type="entry name" value="TRIGGER FACTOR CHAPERONE AND PEPTIDYL-PROLYL CIS/TRANS ISOMERASE"/>
    <property type="match status" value="1"/>
</dbReference>
<dbReference type="PANTHER" id="PTHR30560:SF3">
    <property type="entry name" value="TRIGGER FACTOR-LIKE PROTEIN TIG, CHLOROPLASTIC"/>
    <property type="match status" value="1"/>
</dbReference>
<dbReference type="Pfam" id="PF05698">
    <property type="entry name" value="Trigger_C"/>
    <property type="match status" value="1"/>
</dbReference>
<dbReference type="Pfam" id="PF05697">
    <property type="entry name" value="Trigger_N"/>
    <property type="match status" value="1"/>
</dbReference>
<dbReference type="PIRSF" id="PIRSF003095">
    <property type="entry name" value="Trigger_factor"/>
    <property type="match status" value="1"/>
</dbReference>
<dbReference type="SUPFAM" id="SSF54534">
    <property type="entry name" value="FKBP-like"/>
    <property type="match status" value="1"/>
</dbReference>
<dbReference type="SUPFAM" id="SSF109998">
    <property type="entry name" value="Triger factor/SurA peptide-binding domain-like"/>
    <property type="match status" value="1"/>
</dbReference>
<dbReference type="SUPFAM" id="SSF102735">
    <property type="entry name" value="Trigger factor ribosome-binding domain"/>
    <property type="match status" value="1"/>
</dbReference>
<organism>
    <name type="scientific">Rhodopirellula baltica (strain DSM 10527 / NCIMB 13988 / SH1)</name>
    <dbReference type="NCBI Taxonomy" id="243090"/>
    <lineage>
        <taxon>Bacteria</taxon>
        <taxon>Pseudomonadati</taxon>
        <taxon>Planctomycetota</taxon>
        <taxon>Planctomycetia</taxon>
        <taxon>Pirellulales</taxon>
        <taxon>Pirellulaceae</taxon>
        <taxon>Rhodopirellula</taxon>
    </lineage>
</organism>
<sequence>MEVTKPHACLREVVVTIPRGEVDRYMKDAYDELVPEAQVPGFRAGRAPRKLVEKQFKDRIEDRVKGSLLMDSLAKVTEDAEFSAIGEPDFDYESIELPEKGEFKYQFSIEVRPEFETPDWKKLELKKPVETISEEDVDAALQRVLSRYASLEASDAPAEIGDRLLITGKFVDGEKTISEMDEERVTLANRLSLSDAVCENFGELMKDCKEGDVVTGKVKLGEGHANEEMQGKEVDATFTVVEVLKEQLPELTSEFLDELGEFETEDELREFVRASLERQANFRTEQAMRGSIIEKLLASADFELPPTLVRRQMKRELDRKVLEFRRSGFDDDMIRRFVNASKQNMQQGTESSLREHFILEQIADEEKIDAEPQEYETEIQLIAEQSDSSPRRVRARLEKTGQMDALRNQIVERKVIELISEAATVTEEPVEKEAEEKNEEFAIDHEVLPTKDHDAIPAAKYDDNTPKGAETEDKQEKDKD</sequence>
<feature type="chain" id="PRO_0000179413" description="Trigger factor">
    <location>
        <begin position="1"/>
        <end position="480"/>
    </location>
</feature>
<feature type="domain" description="PPIase FKBP-type" evidence="1">
    <location>
        <begin position="161"/>
        <end position="249"/>
    </location>
</feature>
<feature type="region of interest" description="Disordered" evidence="2">
    <location>
        <begin position="426"/>
        <end position="480"/>
    </location>
</feature>
<feature type="compositionally biased region" description="Basic and acidic residues" evidence="2">
    <location>
        <begin position="429"/>
        <end position="480"/>
    </location>
</feature>
<gene>
    <name evidence="1" type="primary">tig</name>
    <name type="ordered locus">RB5681</name>
</gene>